<accession>Q8Z7H3</accession>
<accession>Q7C9E5</accession>
<gene>
    <name type="primary">phoQ</name>
    <name type="ordered locus">STY1270</name>
    <name type="ordered locus">t1690</name>
</gene>
<protein>
    <recommendedName>
        <fullName>Virulence sensor histidine kinase PhoQ</fullName>
        <ecNumber>2.7.13.3</ecNumber>
        <ecNumber>3.1.3.-</ecNumber>
    </recommendedName>
    <alternativeName>
        <fullName>Sensor histidine protein kinase/phosphatase PhoQ</fullName>
    </alternativeName>
</protein>
<dbReference type="EC" id="2.7.13.3"/>
<dbReference type="EC" id="3.1.3.-"/>
<dbReference type="EMBL" id="AL513382">
    <property type="protein sequence ID" value="CAD08354.1"/>
    <property type="molecule type" value="Genomic_DNA"/>
</dbReference>
<dbReference type="EMBL" id="AE014613">
    <property type="protein sequence ID" value="AAO69315.1"/>
    <property type="molecule type" value="Genomic_DNA"/>
</dbReference>
<dbReference type="RefSeq" id="NP_455722.1">
    <property type="nucleotide sequence ID" value="NC_003198.1"/>
</dbReference>
<dbReference type="RefSeq" id="WP_001031689.1">
    <property type="nucleotide sequence ID" value="NZ_WSUR01000030.1"/>
</dbReference>
<dbReference type="SMR" id="Q8Z7H3"/>
<dbReference type="STRING" id="220341.gene:17585234"/>
<dbReference type="KEGG" id="stt:t1690"/>
<dbReference type="KEGG" id="sty:STY1270"/>
<dbReference type="PATRIC" id="fig|220341.7.peg.1275"/>
<dbReference type="eggNOG" id="COG2205">
    <property type="taxonomic scope" value="Bacteria"/>
</dbReference>
<dbReference type="HOGENOM" id="CLU_000445_42_0_6"/>
<dbReference type="OMA" id="TLVFIYD"/>
<dbReference type="OrthoDB" id="9809567at2"/>
<dbReference type="Proteomes" id="UP000000541">
    <property type="component" value="Chromosome"/>
</dbReference>
<dbReference type="Proteomes" id="UP000002670">
    <property type="component" value="Chromosome"/>
</dbReference>
<dbReference type="GO" id="GO:0005886">
    <property type="term" value="C:plasma membrane"/>
    <property type="evidence" value="ECO:0007669"/>
    <property type="project" value="UniProtKB-SubCell"/>
</dbReference>
<dbReference type="GO" id="GO:0005524">
    <property type="term" value="F:ATP binding"/>
    <property type="evidence" value="ECO:0007669"/>
    <property type="project" value="UniProtKB-KW"/>
</dbReference>
<dbReference type="GO" id="GO:0046872">
    <property type="term" value="F:metal ion binding"/>
    <property type="evidence" value="ECO:0007669"/>
    <property type="project" value="UniProtKB-KW"/>
</dbReference>
<dbReference type="GO" id="GO:0004721">
    <property type="term" value="F:phosphoprotein phosphatase activity"/>
    <property type="evidence" value="ECO:0007669"/>
    <property type="project" value="UniProtKB-KW"/>
</dbReference>
<dbReference type="GO" id="GO:0000155">
    <property type="term" value="F:phosphorelay sensor kinase activity"/>
    <property type="evidence" value="ECO:0007669"/>
    <property type="project" value="InterPro"/>
</dbReference>
<dbReference type="CDD" id="cd16954">
    <property type="entry name" value="HATPase_PhoQ-like"/>
    <property type="match status" value="1"/>
</dbReference>
<dbReference type="FunFam" id="1.10.287.130:FF:000013">
    <property type="entry name" value="Sensor histidine kinase PhoQ"/>
    <property type="match status" value="1"/>
</dbReference>
<dbReference type="FunFam" id="3.30.450.140:FF:000001">
    <property type="entry name" value="Virulence sensor histidine kinase PhoQ"/>
    <property type="match status" value="1"/>
</dbReference>
<dbReference type="FunFam" id="3.30.565.10:FF:000019">
    <property type="entry name" value="Virulence sensor histidine kinase PhoQ"/>
    <property type="match status" value="1"/>
</dbReference>
<dbReference type="Gene3D" id="1.10.287.130">
    <property type="match status" value="1"/>
</dbReference>
<dbReference type="Gene3D" id="3.30.450.140">
    <property type="match status" value="1"/>
</dbReference>
<dbReference type="Gene3D" id="3.30.565.10">
    <property type="entry name" value="Histidine kinase-like ATPase, C-terminal domain"/>
    <property type="match status" value="1"/>
</dbReference>
<dbReference type="InterPro" id="IPR003660">
    <property type="entry name" value="HAMP_dom"/>
</dbReference>
<dbReference type="InterPro" id="IPR036890">
    <property type="entry name" value="HATPase_C_sf"/>
</dbReference>
<dbReference type="InterPro" id="IPR005467">
    <property type="entry name" value="His_kinase_dom"/>
</dbReference>
<dbReference type="InterPro" id="IPR036097">
    <property type="entry name" value="HisK_dim/P_sf"/>
</dbReference>
<dbReference type="InterPro" id="IPR015014">
    <property type="entry name" value="PhoQ_Sensor"/>
</dbReference>
<dbReference type="InterPro" id="IPR038429">
    <property type="entry name" value="PhoQ_Sensor_sf"/>
</dbReference>
<dbReference type="InterPro" id="IPR004358">
    <property type="entry name" value="Sig_transdc_His_kin-like_C"/>
</dbReference>
<dbReference type="InterPro" id="IPR050428">
    <property type="entry name" value="TCS_sensor_his_kinase"/>
</dbReference>
<dbReference type="NCBIfam" id="NF008077">
    <property type="entry name" value="PRK10815.1"/>
    <property type="match status" value="1"/>
</dbReference>
<dbReference type="PANTHER" id="PTHR45436">
    <property type="entry name" value="SENSOR HISTIDINE KINASE YKOH"/>
    <property type="match status" value="1"/>
</dbReference>
<dbReference type="PANTHER" id="PTHR45436:SF4">
    <property type="entry name" value="SENSOR PROTEIN PHOQ"/>
    <property type="match status" value="1"/>
</dbReference>
<dbReference type="Pfam" id="PF02518">
    <property type="entry name" value="HATPase_c"/>
    <property type="match status" value="1"/>
</dbReference>
<dbReference type="Pfam" id="PF08918">
    <property type="entry name" value="PhoQ_Sensor"/>
    <property type="match status" value="1"/>
</dbReference>
<dbReference type="PRINTS" id="PR00344">
    <property type="entry name" value="BCTRLSENSOR"/>
</dbReference>
<dbReference type="SMART" id="SM00387">
    <property type="entry name" value="HATPase_c"/>
    <property type="match status" value="1"/>
</dbReference>
<dbReference type="SUPFAM" id="SSF55874">
    <property type="entry name" value="ATPase domain of HSP90 chaperone/DNA topoisomerase II/histidine kinase"/>
    <property type="match status" value="1"/>
</dbReference>
<dbReference type="SUPFAM" id="SSF47384">
    <property type="entry name" value="Homodimeric domain of signal transducing histidine kinase"/>
    <property type="match status" value="1"/>
</dbReference>
<dbReference type="PROSITE" id="PS50885">
    <property type="entry name" value="HAMP"/>
    <property type="match status" value="1"/>
</dbReference>
<dbReference type="PROSITE" id="PS50109">
    <property type="entry name" value="HIS_KIN"/>
    <property type="match status" value="1"/>
</dbReference>
<evidence type="ECO:0000250" key="1"/>
<evidence type="ECO:0000255" key="2"/>
<evidence type="ECO:0000255" key="3">
    <source>
        <dbReference type="PROSITE-ProRule" id="PRU00102"/>
    </source>
</evidence>
<evidence type="ECO:0000255" key="4">
    <source>
        <dbReference type="PROSITE-ProRule" id="PRU00107"/>
    </source>
</evidence>
<evidence type="ECO:0000269" key="5">
    <source>
    </source>
</evidence>
<evidence type="ECO:0000269" key="6">
    <source>
    </source>
</evidence>
<organism>
    <name type="scientific">Salmonella typhi</name>
    <dbReference type="NCBI Taxonomy" id="90370"/>
    <lineage>
        <taxon>Bacteria</taxon>
        <taxon>Pseudomonadati</taxon>
        <taxon>Pseudomonadota</taxon>
        <taxon>Gammaproteobacteria</taxon>
        <taxon>Enterobacterales</taxon>
        <taxon>Enterobacteriaceae</taxon>
        <taxon>Salmonella</taxon>
    </lineage>
</organism>
<keyword id="KW-0067">ATP-binding</keyword>
<keyword id="KW-0997">Cell inner membrane</keyword>
<keyword id="KW-1003">Cell membrane</keyword>
<keyword id="KW-0341">Growth regulation</keyword>
<keyword id="KW-0378">Hydrolase</keyword>
<keyword id="KW-0418">Kinase</keyword>
<keyword id="KW-0460">Magnesium</keyword>
<keyword id="KW-0472">Membrane</keyword>
<keyword id="KW-0479">Metal-binding</keyword>
<keyword id="KW-0547">Nucleotide-binding</keyword>
<keyword id="KW-0597">Phosphoprotein</keyword>
<keyword id="KW-0904">Protein phosphatase</keyword>
<keyword id="KW-0808">Transferase</keyword>
<keyword id="KW-0812">Transmembrane</keyword>
<keyword id="KW-1133">Transmembrane helix</keyword>
<keyword id="KW-0902">Two-component regulatory system</keyword>
<keyword id="KW-0843">Virulence</keyword>
<feature type="chain" id="PRO_0000074842" description="Virulence sensor histidine kinase PhoQ">
    <location>
        <begin position="1"/>
        <end position="487"/>
    </location>
</feature>
<feature type="topological domain" description="Cytoplasmic" evidence="2">
    <location>
        <begin position="1"/>
        <end position="16"/>
    </location>
</feature>
<feature type="transmembrane region" description="Helical" evidence="2">
    <location>
        <begin position="17"/>
        <end position="37"/>
    </location>
</feature>
<feature type="topological domain" description="Periplasmic" evidence="2">
    <location>
        <begin position="38"/>
        <end position="193"/>
    </location>
</feature>
<feature type="transmembrane region" description="Helical" evidence="2">
    <location>
        <begin position="194"/>
        <end position="214"/>
    </location>
</feature>
<feature type="topological domain" description="Cytoplasmic" evidence="2">
    <location>
        <begin position="215"/>
        <end position="487"/>
    </location>
</feature>
<feature type="domain" description="HAMP" evidence="3">
    <location>
        <begin position="215"/>
        <end position="266"/>
    </location>
</feature>
<feature type="domain" description="Histidine kinase" evidence="4">
    <location>
        <begin position="274"/>
        <end position="481"/>
    </location>
</feature>
<feature type="binding site" evidence="1">
    <location>
        <position position="151"/>
    </location>
    <ligand>
        <name>a divalent metal cation</name>
        <dbReference type="ChEBI" id="CHEBI:60240"/>
    </ligand>
</feature>
<feature type="binding site" evidence="1">
    <location>
        <position position="152"/>
    </location>
    <ligand>
        <name>a divalent metal cation</name>
        <dbReference type="ChEBI" id="CHEBI:60240"/>
    </ligand>
</feature>
<feature type="binding site" evidence="1">
    <location>
        <begin position="386"/>
        <end position="394"/>
    </location>
    <ligand>
        <name>ATP</name>
        <dbReference type="ChEBI" id="CHEBI:30616"/>
    </ligand>
</feature>
<feature type="binding site" evidence="1">
    <location>
        <position position="386"/>
    </location>
    <ligand>
        <name>Mg(2+)</name>
        <dbReference type="ChEBI" id="CHEBI:18420"/>
    </ligand>
</feature>
<feature type="binding site" evidence="1">
    <location>
        <begin position="416"/>
        <end position="421"/>
    </location>
    <ligand>
        <name>ATP</name>
        <dbReference type="ChEBI" id="CHEBI:30616"/>
    </ligand>
</feature>
<feature type="binding site" evidence="1">
    <location>
        <begin position="435"/>
        <end position="447"/>
    </location>
    <ligand>
        <name>ATP</name>
        <dbReference type="ChEBI" id="CHEBI:30616"/>
    </ligand>
</feature>
<feature type="binding site" evidence="1">
    <location>
        <position position="443"/>
    </location>
    <ligand>
        <name>Mg(2+)</name>
        <dbReference type="ChEBI" id="CHEBI:18420"/>
    </ligand>
</feature>
<feature type="site" description="Plays a critical role in the switching between kinase and phosphatase states" evidence="1">
    <location>
        <position position="202"/>
    </location>
</feature>
<feature type="modified residue" description="Phosphohistidine; by autocatalysis" evidence="4">
    <location>
        <position position="277"/>
    </location>
</feature>
<proteinExistence type="inferred from homology"/>
<name>PHOQ_SALTI</name>
<comment type="function">
    <text evidence="1 5 6">Member of the two-component regulatory system PhoP/PhoQ which regulates the expression of genes involved in virulence and resistance to host defense antimicrobial peptides. In low periplasmic Mg(2+), PhoQ functions as a membrane-associated protein kinase that undergoes autophosphorylation and subsequently transfers the phosphate to PhoP, which results in the expression of PhoP-activated genes (PAG) and repression of PhoP-repressed genes (PRG). In high periplasmic Mg(2+), acts as a protein phosphatase that dephosphorylates phospho-PhoP, which results in the repression of PAG and may lead to expression of some PRG (By similarity). Promotes intramacrophage survival of S.typhi. Is required to enhance bacterial resistance to bile in the human intestinal cells.</text>
</comment>
<comment type="catalytic activity">
    <reaction>
        <text>ATP + protein L-histidine = ADP + protein N-phospho-L-histidine.</text>
        <dbReference type="EC" id="2.7.13.3"/>
    </reaction>
</comment>
<comment type="subunit">
    <text evidence="1">Homodimer.</text>
</comment>
<comment type="subcellular location">
    <subcellularLocation>
        <location evidence="1">Cell inner membrane</location>
        <topology evidence="1">Multi-pass membrane protein</topology>
    </subcellularLocation>
</comment>
<reference key="1">
    <citation type="journal article" date="2001" name="Nature">
        <title>Complete genome sequence of a multiple drug resistant Salmonella enterica serovar Typhi CT18.</title>
        <authorList>
            <person name="Parkhill J."/>
            <person name="Dougan G."/>
            <person name="James K.D."/>
            <person name="Thomson N.R."/>
            <person name="Pickard D."/>
            <person name="Wain J."/>
            <person name="Churcher C.M."/>
            <person name="Mungall K.L."/>
            <person name="Bentley S.D."/>
            <person name="Holden M.T.G."/>
            <person name="Sebaihia M."/>
            <person name="Baker S."/>
            <person name="Basham D."/>
            <person name="Brooks K."/>
            <person name="Chillingworth T."/>
            <person name="Connerton P."/>
            <person name="Cronin A."/>
            <person name="Davis P."/>
            <person name="Davies R.M."/>
            <person name="Dowd L."/>
            <person name="White N."/>
            <person name="Farrar J."/>
            <person name="Feltwell T."/>
            <person name="Hamlin N."/>
            <person name="Haque A."/>
            <person name="Hien T.T."/>
            <person name="Holroyd S."/>
            <person name="Jagels K."/>
            <person name="Krogh A."/>
            <person name="Larsen T.S."/>
            <person name="Leather S."/>
            <person name="Moule S."/>
            <person name="O'Gaora P."/>
            <person name="Parry C."/>
            <person name="Quail M.A."/>
            <person name="Rutherford K.M."/>
            <person name="Simmonds M."/>
            <person name="Skelton J."/>
            <person name="Stevens K."/>
            <person name="Whitehead S."/>
            <person name="Barrell B.G."/>
        </authorList>
    </citation>
    <scope>NUCLEOTIDE SEQUENCE [LARGE SCALE GENOMIC DNA]</scope>
    <source>
        <strain>CT18</strain>
    </source>
</reference>
<reference key="2">
    <citation type="journal article" date="2003" name="J. Bacteriol.">
        <title>Comparative genomics of Salmonella enterica serovar Typhi strains Ty2 and CT18.</title>
        <authorList>
            <person name="Deng W."/>
            <person name="Liou S.-R."/>
            <person name="Plunkett G. III"/>
            <person name="Mayhew G.F."/>
            <person name="Rose D.J."/>
            <person name="Burland V."/>
            <person name="Kodoyianni V."/>
            <person name="Schwartz D.C."/>
            <person name="Blattner F.R."/>
        </authorList>
    </citation>
    <scope>NUCLEOTIDE SEQUENCE [LARGE SCALE GENOMIC DNA]</scope>
    <source>
        <strain>ATCC 700931 / Ty2</strain>
    </source>
</reference>
<reference key="3">
    <citation type="journal article" date="1999" name="Infect. Immun.">
        <title>PhoP-PhoQ-regulated loci are required for enhanced bile resistance in Salmonella spp.</title>
        <authorList>
            <person name="van Velkinburgh J.C."/>
            <person name="Gunn J.S."/>
        </authorList>
    </citation>
    <scope>FUNCTION</scope>
    <source>
        <strain>ATCC 700931 / Ty2</strain>
    </source>
</reference>
<reference key="4">
    <citation type="journal article" date="1999" name="Microbiology">
        <title>The Salmonella typhi melittin resistance gene pqaB affects intracellular growth in PMA-differentiated U937 cells, polymyxin B resistance and lipopolysaccharide.</title>
        <authorList>
            <person name="Baker S.J."/>
            <person name="Gunn J.S."/>
            <person name="Morona R."/>
        </authorList>
    </citation>
    <scope>FUNCTION</scope>
    <source>
        <strain>ATCC 700931 / Ty2</strain>
    </source>
</reference>
<sequence length="487" mass="55497">MNKFARHFLPLSLRVRFLLATAGVVLVLSLAYGIVALVGYSVSFDKTTFRLLRGESNLFYTLAKWENNKISVELPENLDMQSPTMTLIYDETGKLLWTQRNIPWLIKSIQPEWLKTNGFHEIETNVDATSTLLSEDHSAQEKLKEVREDDDDAEMTHSVAVNIYPATTRMPQLTIVVVDTIPIELKRSYMVWSWFVYVLAANLLLVIPLLWIAAWWSLRPIEALAREVRELEDHHREMLNPETTRELTSLVRNLNQLLKSERERYNKYRTTLTDLTHSLKTPLAVLQSTLRSLRNEKMSVSKAEPVMLEQISRISQQIGYYLHRASMRGSGVLLSRELHPVAPLLDNLISALNKVYQRKGVNISMDISPEISFVGEQNDFVEVMGNVLDNACKYCLEFVEISARQTDDHLHIFVEDDGPGIPHSKRSLVFDRGQRADTLRPGQGVGLAVAREITEQYAGQIIASDSLLGGARMEVVFGRQHPTQKEE</sequence>